<comment type="function">
    <text evidence="1">ATP-dependent carboxylate-amine ligase which exhibits weak glutamate--cysteine ligase activity.</text>
</comment>
<comment type="catalytic activity">
    <reaction evidence="1">
        <text>L-cysteine + L-glutamate + ATP = gamma-L-glutamyl-L-cysteine + ADP + phosphate + H(+)</text>
        <dbReference type="Rhea" id="RHEA:13285"/>
        <dbReference type="ChEBI" id="CHEBI:15378"/>
        <dbReference type="ChEBI" id="CHEBI:29985"/>
        <dbReference type="ChEBI" id="CHEBI:30616"/>
        <dbReference type="ChEBI" id="CHEBI:35235"/>
        <dbReference type="ChEBI" id="CHEBI:43474"/>
        <dbReference type="ChEBI" id="CHEBI:58173"/>
        <dbReference type="ChEBI" id="CHEBI:456216"/>
        <dbReference type="EC" id="6.3.2.2"/>
    </reaction>
</comment>
<comment type="similarity">
    <text evidence="1">Belongs to the glutamate--cysteine ligase type 2 family. YbdK subfamily.</text>
</comment>
<evidence type="ECO:0000255" key="1">
    <source>
        <dbReference type="HAMAP-Rule" id="MF_01609"/>
    </source>
</evidence>
<gene>
    <name type="ordered locus">Ajs_0357</name>
</gene>
<feature type="chain" id="PRO_0000291479" description="Putative glutamate--cysteine ligase 2">
    <location>
        <begin position="1"/>
        <end position="374"/>
    </location>
</feature>
<accession>A1W2Y5</accession>
<proteinExistence type="inferred from homology"/>
<reference key="1">
    <citation type="submission" date="2006-12" db="EMBL/GenBank/DDBJ databases">
        <title>Complete sequence of chromosome 1 of Acidovorax sp. JS42.</title>
        <authorList>
            <person name="Copeland A."/>
            <person name="Lucas S."/>
            <person name="Lapidus A."/>
            <person name="Barry K."/>
            <person name="Detter J.C."/>
            <person name="Glavina del Rio T."/>
            <person name="Dalin E."/>
            <person name="Tice H."/>
            <person name="Pitluck S."/>
            <person name="Chertkov O."/>
            <person name="Brettin T."/>
            <person name="Bruce D."/>
            <person name="Han C."/>
            <person name="Tapia R."/>
            <person name="Gilna P."/>
            <person name="Schmutz J."/>
            <person name="Larimer F."/>
            <person name="Land M."/>
            <person name="Hauser L."/>
            <person name="Kyrpides N."/>
            <person name="Kim E."/>
            <person name="Stahl D."/>
            <person name="Richardson P."/>
        </authorList>
    </citation>
    <scope>NUCLEOTIDE SEQUENCE [LARGE SCALE GENOMIC DNA]</scope>
    <source>
        <strain>JS42</strain>
    </source>
</reference>
<sequence>MSLEAFHHSEPLTLGVELELQLVSTNDYDLAPYAEDMLRIMKKVPLPGSVVPEMTNSMIEISTGVCHSSSEVLGQLTQIRDALVKSADKLNIAVVGGGTHPFQQWHERRIYDKPRFQELSQLYGYLSKQFTIFGQHVHIGCPDADSALLMLHRMSRYIPHFIALSASSPYVQAQDTQFDSARLNSVFAFPLSGRAPCVLTWSEFEQYFNKMTRTGVVKSMKDFYWDIRPKPEYGTIEIRVFDTPLTIERAAALAGYVQSLAAWFLAEQPFTPTEDDYLVYTYNRFQACRFGLDAVYVDPASGDHMPLRDHILQTLDHVARYAGTHGASGALHMLRGETALGQNDARWLRERQREEQLLAEVSRQAALRFRGHDI</sequence>
<dbReference type="EC" id="6.3.2.2" evidence="1"/>
<dbReference type="EMBL" id="CP000539">
    <property type="protein sequence ID" value="ABM40610.1"/>
    <property type="molecule type" value="Genomic_DNA"/>
</dbReference>
<dbReference type="SMR" id="A1W2Y5"/>
<dbReference type="STRING" id="232721.Ajs_0357"/>
<dbReference type="KEGG" id="ajs:Ajs_0357"/>
<dbReference type="eggNOG" id="COG2170">
    <property type="taxonomic scope" value="Bacteria"/>
</dbReference>
<dbReference type="HOGENOM" id="CLU_044848_1_1_4"/>
<dbReference type="Proteomes" id="UP000000645">
    <property type="component" value="Chromosome"/>
</dbReference>
<dbReference type="GO" id="GO:0005524">
    <property type="term" value="F:ATP binding"/>
    <property type="evidence" value="ECO:0007669"/>
    <property type="project" value="UniProtKB-KW"/>
</dbReference>
<dbReference type="GO" id="GO:0004357">
    <property type="term" value="F:glutamate-cysteine ligase activity"/>
    <property type="evidence" value="ECO:0007669"/>
    <property type="project" value="UniProtKB-EC"/>
</dbReference>
<dbReference type="GO" id="GO:0042398">
    <property type="term" value="P:modified amino acid biosynthetic process"/>
    <property type="evidence" value="ECO:0007669"/>
    <property type="project" value="InterPro"/>
</dbReference>
<dbReference type="Gene3D" id="3.30.590.20">
    <property type="match status" value="1"/>
</dbReference>
<dbReference type="HAMAP" id="MF_01609">
    <property type="entry name" value="Glu_cys_ligase_2"/>
    <property type="match status" value="1"/>
</dbReference>
<dbReference type="InterPro" id="IPR050141">
    <property type="entry name" value="GCL_type2/YbdK_subfam"/>
</dbReference>
<dbReference type="InterPro" id="IPR006336">
    <property type="entry name" value="GCS2"/>
</dbReference>
<dbReference type="InterPro" id="IPR014746">
    <property type="entry name" value="Gln_synth/guanido_kin_cat_dom"/>
</dbReference>
<dbReference type="InterPro" id="IPR011793">
    <property type="entry name" value="YbdK"/>
</dbReference>
<dbReference type="NCBIfam" id="TIGR02050">
    <property type="entry name" value="gshA_cyan_rel"/>
    <property type="match status" value="1"/>
</dbReference>
<dbReference type="NCBIfam" id="NF010040">
    <property type="entry name" value="PRK13516.1"/>
    <property type="match status" value="1"/>
</dbReference>
<dbReference type="PANTHER" id="PTHR36510">
    <property type="entry name" value="GLUTAMATE--CYSTEINE LIGASE 2-RELATED"/>
    <property type="match status" value="1"/>
</dbReference>
<dbReference type="PANTHER" id="PTHR36510:SF1">
    <property type="entry name" value="GLUTAMATE--CYSTEINE LIGASE 2-RELATED"/>
    <property type="match status" value="1"/>
</dbReference>
<dbReference type="Pfam" id="PF04107">
    <property type="entry name" value="GCS2"/>
    <property type="match status" value="1"/>
</dbReference>
<dbReference type="SUPFAM" id="SSF55931">
    <property type="entry name" value="Glutamine synthetase/guanido kinase"/>
    <property type="match status" value="1"/>
</dbReference>
<name>GCS2_ACISJ</name>
<organism>
    <name type="scientific">Acidovorax sp. (strain JS42)</name>
    <dbReference type="NCBI Taxonomy" id="232721"/>
    <lineage>
        <taxon>Bacteria</taxon>
        <taxon>Pseudomonadati</taxon>
        <taxon>Pseudomonadota</taxon>
        <taxon>Betaproteobacteria</taxon>
        <taxon>Burkholderiales</taxon>
        <taxon>Comamonadaceae</taxon>
        <taxon>Acidovorax</taxon>
    </lineage>
</organism>
<keyword id="KW-0067">ATP-binding</keyword>
<keyword id="KW-0436">Ligase</keyword>
<keyword id="KW-0547">Nucleotide-binding</keyword>
<protein>
    <recommendedName>
        <fullName evidence="1">Putative glutamate--cysteine ligase 2</fullName>
        <ecNumber evidence="1">6.3.2.2</ecNumber>
    </recommendedName>
    <alternativeName>
        <fullName evidence="1">Gamma-glutamylcysteine synthetase 2</fullName>
        <shortName evidence="1">GCS 2</shortName>
        <shortName evidence="1">Gamma-GCS 2</shortName>
    </alternativeName>
</protein>